<comment type="function">
    <text evidence="1">Transfers a phosphoglycerol residue from phosphatidylglycerol to the membrane-bound nascent glucan backbones.</text>
</comment>
<comment type="catalytic activity">
    <reaction evidence="1">
        <text>a phosphatidylglycerol + a membrane-derived-oligosaccharide D-glucose = a 1,2-diacyl-sn-glycerol + a membrane-derived-oligosaccharide 6-(glycerophospho)-D-glucose.</text>
        <dbReference type="EC" id="2.7.8.20"/>
    </reaction>
</comment>
<comment type="pathway">
    <text evidence="1">Glycan metabolism; osmoregulated periplasmic glucan (OPG) biosynthesis.</text>
</comment>
<comment type="subcellular location">
    <subcellularLocation>
        <location evidence="1">Cell inner membrane</location>
        <topology evidence="1">Multi-pass membrane protein</topology>
    </subcellularLocation>
</comment>
<comment type="similarity">
    <text evidence="1">Belongs to the OpgB family.</text>
</comment>
<accession>B7MNB1</accession>
<dbReference type="EC" id="2.7.8.20" evidence="1"/>
<dbReference type="EMBL" id="CU928161">
    <property type="protein sequence ID" value="CAR06124.1"/>
    <property type="molecule type" value="Genomic_DNA"/>
</dbReference>
<dbReference type="RefSeq" id="WP_001292679.1">
    <property type="nucleotide sequence ID" value="NC_011742.1"/>
</dbReference>
<dbReference type="SMR" id="B7MNB1"/>
<dbReference type="KEGG" id="ecz:ECS88_4980"/>
<dbReference type="HOGENOM" id="CLU_023986_1_0_6"/>
<dbReference type="UniPathway" id="UPA00637"/>
<dbReference type="Proteomes" id="UP000000747">
    <property type="component" value="Chromosome"/>
</dbReference>
<dbReference type="GO" id="GO:0005886">
    <property type="term" value="C:plasma membrane"/>
    <property type="evidence" value="ECO:0007669"/>
    <property type="project" value="UniProtKB-SubCell"/>
</dbReference>
<dbReference type="GO" id="GO:0008960">
    <property type="term" value="F:phosphatidylglycerol-membrane-oligosaccharide glycerophosphotransferase activity"/>
    <property type="evidence" value="ECO:0007669"/>
    <property type="project" value="UniProtKB-UniRule"/>
</dbReference>
<dbReference type="GO" id="GO:0009250">
    <property type="term" value="P:glucan biosynthetic process"/>
    <property type="evidence" value="ECO:0007669"/>
    <property type="project" value="UniProtKB-UniRule"/>
</dbReference>
<dbReference type="CDD" id="cd16015">
    <property type="entry name" value="LTA_synthase"/>
    <property type="match status" value="1"/>
</dbReference>
<dbReference type="FunFam" id="3.40.720.10:FF:000009">
    <property type="entry name" value="Phosphoglycerol transferase I"/>
    <property type="match status" value="1"/>
</dbReference>
<dbReference type="Gene3D" id="3.40.720.10">
    <property type="entry name" value="Alkaline Phosphatase, subunit A"/>
    <property type="match status" value="1"/>
</dbReference>
<dbReference type="HAMAP" id="MF_01070">
    <property type="entry name" value="MdoB_OpgB"/>
    <property type="match status" value="1"/>
</dbReference>
<dbReference type="InterPro" id="IPR017850">
    <property type="entry name" value="Alkaline_phosphatase_core_sf"/>
</dbReference>
<dbReference type="InterPro" id="IPR054288">
    <property type="entry name" value="DUF7024"/>
</dbReference>
<dbReference type="InterPro" id="IPR020881">
    <property type="entry name" value="OpgB"/>
</dbReference>
<dbReference type="InterPro" id="IPR050448">
    <property type="entry name" value="OpgB/LTA_synthase_biosynth"/>
</dbReference>
<dbReference type="InterPro" id="IPR000917">
    <property type="entry name" value="Sulfatase_N"/>
</dbReference>
<dbReference type="NCBIfam" id="NF003000">
    <property type="entry name" value="PRK03776.1"/>
    <property type="match status" value="1"/>
</dbReference>
<dbReference type="PANTHER" id="PTHR47371">
    <property type="entry name" value="LIPOTEICHOIC ACID SYNTHASE"/>
    <property type="match status" value="1"/>
</dbReference>
<dbReference type="PANTHER" id="PTHR47371:SF3">
    <property type="entry name" value="PHOSPHOGLYCEROL TRANSFERASE I"/>
    <property type="match status" value="1"/>
</dbReference>
<dbReference type="Pfam" id="PF22895">
    <property type="entry name" value="DUF7024"/>
    <property type="match status" value="1"/>
</dbReference>
<dbReference type="Pfam" id="PF00884">
    <property type="entry name" value="Sulfatase"/>
    <property type="match status" value="1"/>
</dbReference>
<dbReference type="SUPFAM" id="SSF53649">
    <property type="entry name" value="Alkaline phosphatase-like"/>
    <property type="match status" value="1"/>
</dbReference>
<protein>
    <recommendedName>
        <fullName evidence="1">Phosphoglycerol transferase I</fullName>
        <ecNumber evidence="1">2.7.8.20</ecNumber>
    </recommendedName>
    <alternativeName>
        <fullName evidence="1">Phosphatidylglycerol--membrane-oligosaccharide glycerophosphotransferase</fullName>
    </alternativeName>
</protein>
<evidence type="ECO:0000255" key="1">
    <source>
        <dbReference type="HAMAP-Rule" id="MF_01070"/>
    </source>
</evidence>
<feature type="chain" id="PRO_1000136620" description="Phosphoglycerol transferase I">
    <location>
        <begin position="1"/>
        <end position="763"/>
    </location>
</feature>
<feature type="transmembrane region" description="Helical" evidence="1">
    <location>
        <begin position="1"/>
        <end position="21"/>
    </location>
</feature>
<feature type="transmembrane region" description="Helical" evidence="1">
    <location>
        <begin position="26"/>
        <end position="46"/>
    </location>
</feature>
<feature type="transmembrane region" description="Helical" evidence="1">
    <location>
        <begin position="77"/>
        <end position="97"/>
    </location>
</feature>
<feature type="transmembrane region" description="Helical" evidence="1">
    <location>
        <begin position="108"/>
        <end position="128"/>
    </location>
</feature>
<organism>
    <name type="scientific">Escherichia coli O45:K1 (strain S88 / ExPEC)</name>
    <dbReference type="NCBI Taxonomy" id="585035"/>
    <lineage>
        <taxon>Bacteria</taxon>
        <taxon>Pseudomonadati</taxon>
        <taxon>Pseudomonadota</taxon>
        <taxon>Gammaproteobacteria</taxon>
        <taxon>Enterobacterales</taxon>
        <taxon>Enterobacteriaceae</taxon>
        <taxon>Escherichia</taxon>
    </lineage>
</organism>
<gene>
    <name evidence="1" type="primary">mdoB</name>
    <name evidence="1" type="synonym">opgB</name>
    <name type="ordered locus">ECS88_4980</name>
</gene>
<keyword id="KW-0997">Cell inner membrane</keyword>
<keyword id="KW-1003">Cell membrane</keyword>
<keyword id="KW-0472">Membrane</keyword>
<keyword id="KW-1185">Reference proteome</keyword>
<keyword id="KW-0808">Transferase</keyword>
<keyword id="KW-0812">Transmembrane</keyword>
<keyword id="KW-1133">Transmembrane helix</keyword>
<proteinExistence type="inferred from homology"/>
<name>OPGB_ECO45</name>
<reference key="1">
    <citation type="journal article" date="2009" name="PLoS Genet.">
        <title>Organised genome dynamics in the Escherichia coli species results in highly diverse adaptive paths.</title>
        <authorList>
            <person name="Touchon M."/>
            <person name="Hoede C."/>
            <person name="Tenaillon O."/>
            <person name="Barbe V."/>
            <person name="Baeriswyl S."/>
            <person name="Bidet P."/>
            <person name="Bingen E."/>
            <person name="Bonacorsi S."/>
            <person name="Bouchier C."/>
            <person name="Bouvet O."/>
            <person name="Calteau A."/>
            <person name="Chiapello H."/>
            <person name="Clermont O."/>
            <person name="Cruveiller S."/>
            <person name="Danchin A."/>
            <person name="Diard M."/>
            <person name="Dossat C."/>
            <person name="Karoui M.E."/>
            <person name="Frapy E."/>
            <person name="Garry L."/>
            <person name="Ghigo J.M."/>
            <person name="Gilles A.M."/>
            <person name="Johnson J."/>
            <person name="Le Bouguenec C."/>
            <person name="Lescat M."/>
            <person name="Mangenot S."/>
            <person name="Martinez-Jehanne V."/>
            <person name="Matic I."/>
            <person name="Nassif X."/>
            <person name="Oztas S."/>
            <person name="Petit M.A."/>
            <person name="Pichon C."/>
            <person name="Rouy Z."/>
            <person name="Ruf C.S."/>
            <person name="Schneider D."/>
            <person name="Tourret J."/>
            <person name="Vacherie B."/>
            <person name="Vallenet D."/>
            <person name="Medigue C."/>
            <person name="Rocha E.P.C."/>
            <person name="Denamur E."/>
        </authorList>
    </citation>
    <scope>NUCLEOTIDE SEQUENCE [LARGE SCALE GENOMIC DNA]</scope>
    <source>
        <strain>S88 / ExPEC</strain>
    </source>
</reference>
<sequence>MSELLSFALFLASVLIYAWKAGRNTWWFAATLTVLGLFVVLNITLFASDYFTGDGINDAVLYTLTNSLTGAGVSKYILPGIGIVLGLTAVFGALGWILRRRRHHPHHFGYSLLALLLALGSVDASPAFRQITELVKSQSRDGDPDFAAYYKEPSKTIPDPKLNLVYIYGESLERTYFDNEAFPDLTPELGALKNEGLDFSHTQQLPGTDYTIAGMVASQCGIPLFAPFEGNASASVSSFFPQNICLGDILKNSGYQNYFVQGANLRFAGKDVFLKSHGFDHLYGSEELKSVVADPHYRNDWGFYDDTVLDEAWKKFEELSRSGQRFSLFTLTVDTHHPDGFISRTCNRKKYDFDGKPNQSFSAVSCSQENIATFINKIKASPWFKDTVIVVSSDHLAMNNTAWKYLNKQDRNNLFFVIRGDKPQQETLAVKRNTMDNGATVLDILGGDNYLGLGRSSLSGQSMSEIFLNIKEKTLAWKPDIIRLWKFPKEMKEFTIDQQKNMIAFSGSHFRLPLLLRVSDKRVEPLPESEYSAPLRFQLADFAPRDNFVWVDRCYKMAQLWAPELALSTDWCVSQGQLGGQQIVQHVDKTTWQGKTAFKDTVIDMARYKGNVDTLKIVDNDIRYKADSFIFNVAGAPEEVKQFSGISRPESWGRWSNAQLGDEVKIEYKHPLPKKFDLVITAKAYGNNASRPIPVRVGNEEQTLVLGNEVTTTTLHFDNPTDADTLVIVPPEPVSTNEGNILGHSPRKLGIGMVEIKVVEREG</sequence>